<organism>
    <name type="scientific">Haemophilus influenzae (strain ATCC 51907 / DSM 11121 / KW20 / Rd)</name>
    <dbReference type="NCBI Taxonomy" id="71421"/>
    <lineage>
        <taxon>Bacteria</taxon>
        <taxon>Pseudomonadati</taxon>
        <taxon>Pseudomonadota</taxon>
        <taxon>Gammaproteobacteria</taxon>
        <taxon>Pasteurellales</taxon>
        <taxon>Pasteurellaceae</taxon>
        <taxon>Haemophilus</taxon>
    </lineage>
</organism>
<dbReference type="EC" id="1.-.-.-"/>
<dbReference type="EMBL" id="L42023">
    <property type="protein sequence ID" value="AAC23205.1"/>
    <property type="molecule type" value="Genomic_DNA"/>
</dbReference>
<dbReference type="PIR" id="F64129">
    <property type="entry name" value="F64129"/>
</dbReference>
<dbReference type="RefSeq" id="NP_439705.1">
    <property type="nucleotide sequence ID" value="NC_000907.1"/>
</dbReference>
<dbReference type="SMR" id="P45250"/>
<dbReference type="STRING" id="71421.HI_1556"/>
<dbReference type="EnsemblBacteria" id="AAC23205">
    <property type="protein sequence ID" value="AAC23205"/>
    <property type="gene ID" value="HI_1556"/>
</dbReference>
<dbReference type="KEGG" id="hin:HI_1556"/>
<dbReference type="PATRIC" id="fig|71421.8.peg.1627"/>
<dbReference type="eggNOG" id="COG1052">
    <property type="taxonomic scope" value="Bacteria"/>
</dbReference>
<dbReference type="HOGENOM" id="CLU_019796_1_3_6"/>
<dbReference type="OrthoDB" id="9805416at2"/>
<dbReference type="PhylomeDB" id="P45250"/>
<dbReference type="BioCyc" id="HINF71421:G1GJ1-1576-MONOMER"/>
<dbReference type="Proteomes" id="UP000000579">
    <property type="component" value="Chromosome"/>
</dbReference>
<dbReference type="GO" id="GO:0051287">
    <property type="term" value="F:NAD binding"/>
    <property type="evidence" value="ECO:0007669"/>
    <property type="project" value="InterPro"/>
</dbReference>
<dbReference type="GO" id="GO:0016616">
    <property type="term" value="F:oxidoreductase activity, acting on the CH-OH group of donors, NAD or NADP as acceptor"/>
    <property type="evidence" value="ECO:0007669"/>
    <property type="project" value="InterPro"/>
</dbReference>
<dbReference type="CDD" id="cd12162">
    <property type="entry name" value="2-Hacid_dh_4"/>
    <property type="match status" value="1"/>
</dbReference>
<dbReference type="Gene3D" id="3.40.50.720">
    <property type="entry name" value="NAD(P)-binding Rossmann-like Domain"/>
    <property type="match status" value="2"/>
</dbReference>
<dbReference type="InterPro" id="IPR050418">
    <property type="entry name" value="D-iso_2-hydroxyacid_DH_PdxB"/>
</dbReference>
<dbReference type="InterPro" id="IPR006139">
    <property type="entry name" value="D-isomer_2_OHA_DH_cat_dom"/>
</dbReference>
<dbReference type="InterPro" id="IPR029753">
    <property type="entry name" value="D-isomer_DH_CS"/>
</dbReference>
<dbReference type="InterPro" id="IPR006140">
    <property type="entry name" value="D-isomer_DH_NAD-bd"/>
</dbReference>
<dbReference type="InterPro" id="IPR036291">
    <property type="entry name" value="NAD(P)-bd_dom_sf"/>
</dbReference>
<dbReference type="NCBIfam" id="NF005387">
    <property type="entry name" value="PRK06932.1"/>
    <property type="match status" value="1"/>
</dbReference>
<dbReference type="PANTHER" id="PTHR43761:SF1">
    <property type="entry name" value="D-ISOMER SPECIFIC 2-HYDROXYACID DEHYDROGENASE CATALYTIC DOMAIN-CONTAINING PROTEIN-RELATED"/>
    <property type="match status" value="1"/>
</dbReference>
<dbReference type="PANTHER" id="PTHR43761">
    <property type="entry name" value="D-ISOMER SPECIFIC 2-HYDROXYACID DEHYDROGENASE FAMILY PROTEIN (AFU_ORTHOLOGUE AFUA_1G13630)"/>
    <property type="match status" value="1"/>
</dbReference>
<dbReference type="Pfam" id="PF00389">
    <property type="entry name" value="2-Hacid_dh"/>
    <property type="match status" value="1"/>
</dbReference>
<dbReference type="Pfam" id="PF02826">
    <property type="entry name" value="2-Hacid_dh_C"/>
    <property type="match status" value="1"/>
</dbReference>
<dbReference type="SUPFAM" id="SSF52283">
    <property type="entry name" value="Formate/glycerate dehydrogenase catalytic domain-like"/>
    <property type="match status" value="1"/>
</dbReference>
<dbReference type="SUPFAM" id="SSF51735">
    <property type="entry name" value="NAD(P)-binding Rossmann-fold domains"/>
    <property type="match status" value="1"/>
</dbReference>
<dbReference type="PROSITE" id="PS00670">
    <property type="entry name" value="D_2_HYDROXYACID_DH_2"/>
    <property type="match status" value="1"/>
</dbReference>
<dbReference type="PROSITE" id="PS00671">
    <property type="entry name" value="D_2_HYDROXYACID_DH_3"/>
    <property type="match status" value="1"/>
</dbReference>
<sequence length="315" mass="34636">MKIVFLDSTAIPKHISIPRPSFEHTWTEYEHTSAEQTIERVKDADIVITSKVIFDRETLQQLPKLKLIAITATGTNNVDLVAAEEMGIAVRNVTGYSSTTVPEHVIGLIFSLKHSLAGWLRDQTEAKWAESKQFCYFDYPITDVRGSTLGVFGKGCLGTEVGRLANAVGMKVLYAEHKDATVCREGYTPFDEVLKQADIVTLHCPLTETTKDLINAETLSKMKKGAFLINTGRGPLIDELALVDALKTGHLGGAALDVMVKEPPEKDNPLILAAKTMPNLIITPHIAWASDSAVTTLVGKVMQNIEEFVQQLHQK</sequence>
<accession>P45250</accession>
<reference key="1">
    <citation type="journal article" date="1995" name="Science">
        <title>Whole-genome random sequencing and assembly of Haemophilus influenzae Rd.</title>
        <authorList>
            <person name="Fleischmann R.D."/>
            <person name="Adams M.D."/>
            <person name="White O."/>
            <person name="Clayton R.A."/>
            <person name="Kirkness E.F."/>
            <person name="Kerlavage A.R."/>
            <person name="Bult C.J."/>
            <person name="Tomb J.-F."/>
            <person name="Dougherty B.A."/>
            <person name="Merrick J.M."/>
            <person name="McKenney K."/>
            <person name="Sutton G.G."/>
            <person name="FitzHugh W."/>
            <person name="Fields C.A."/>
            <person name="Gocayne J.D."/>
            <person name="Scott J.D."/>
            <person name="Shirley R."/>
            <person name="Liu L.-I."/>
            <person name="Glodek A."/>
            <person name="Kelley J.M."/>
            <person name="Weidman J.F."/>
            <person name="Phillips C.A."/>
            <person name="Spriggs T."/>
            <person name="Hedblom E."/>
            <person name="Cotton M.D."/>
            <person name="Utterback T.R."/>
            <person name="Hanna M.C."/>
            <person name="Nguyen D.T."/>
            <person name="Saudek D.M."/>
            <person name="Brandon R.C."/>
            <person name="Fine L.D."/>
            <person name="Fritchman J.L."/>
            <person name="Fuhrmann J.L."/>
            <person name="Geoghagen N.S.M."/>
            <person name="Gnehm C.L."/>
            <person name="McDonald L.A."/>
            <person name="Small K.V."/>
            <person name="Fraser C.M."/>
            <person name="Smith H.O."/>
            <person name="Venter J.C."/>
        </authorList>
    </citation>
    <scope>NUCLEOTIDE SEQUENCE [LARGE SCALE GENOMIC DNA]</scope>
    <source>
        <strain>ATCC 51907 / DSM 11121 / KW20 / Rd</strain>
    </source>
</reference>
<reference key="2">
    <citation type="journal article" date="2000" name="Electrophoresis">
        <title>Two-dimensional map of the proteome of Haemophilus influenzae.</title>
        <authorList>
            <person name="Langen H."/>
            <person name="Takacs B."/>
            <person name="Evers S."/>
            <person name="Berndt P."/>
            <person name="Lahm H.W."/>
            <person name="Wipf B."/>
            <person name="Gray C."/>
            <person name="Fountoulakis M."/>
        </authorList>
    </citation>
    <scope>IDENTIFICATION BY MASS SPECTROMETRY</scope>
    <source>
        <strain>ATCC 51907 / DSM 11121 / KW20 / Rd</strain>
    </source>
</reference>
<protein>
    <recommendedName>
        <fullName>Putative 2-hydroxyacid dehydrogenase HI_1556</fullName>
        <ecNumber>1.-.-.-</ecNumber>
    </recommendedName>
</protein>
<comment type="similarity">
    <text evidence="2">Belongs to the D-isomer specific 2-hydroxyacid dehydrogenase family.</text>
</comment>
<keyword id="KW-0520">NAD</keyword>
<keyword id="KW-0560">Oxidoreductase</keyword>
<keyword id="KW-1185">Reference proteome</keyword>
<feature type="chain" id="PRO_0000076034" description="Putative 2-hydroxyacid dehydrogenase HI_1556">
    <location>
        <begin position="1"/>
        <end position="315"/>
    </location>
</feature>
<feature type="active site" evidence="1">
    <location>
        <position position="233"/>
    </location>
</feature>
<feature type="active site" evidence="1">
    <location>
        <position position="262"/>
    </location>
</feature>
<feature type="active site" description="Proton donor" evidence="1">
    <location>
        <position position="285"/>
    </location>
</feature>
<feature type="binding site" evidence="1">
    <location>
        <position position="73"/>
    </location>
    <ligand>
        <name>NAD(+)</name>
        <dbReference type="ChEBI" id="CHEBI:57540"/>
    </ligand>
</feature>
<feature type="binding site" evidence="1">
    <location>
        <begin position="156"/>
        <end position="157"/>
    </location>
    <ligand>
        <name>NAD(+)</name>
        <dbReference type="ChEBI" id="CHEBI:57540"/>
    </ligand>
</feature>
<feature type="binding site" evidence="1">
    <location>
        <begin position="231"/>
        <end position="233"/>
    </location>
    <ligand>
        <name>NAD(+)</name>
        <dbReference type="ChEBI" id="CHEBI:57540"/>
    </ligand>
</feature>
<feature type="binding site" evidence="1">
    <location>
        <position position="257"/>
    </location>
    <ligand>
        <name>NAD(+)</name>
        <dbReference type="ChEBI" id="CHEBI:57540"/>
    </ligand>
</feature>
<feature type="binding site" evidence="1">
    <location>
        <begin position="285"/>
        <end position="288"/>
    </location>
    <ligand>
        <name>NAD(+)</name>
        <dbReference type="ChEBI" id="CHEBI:57540"/>
    </ligand>
</feature>
<gene>
    <name type="ordered locus">HI_1556</name>
</gene>
<proteinExistence type="evidence at protein level"/>
<evidence type="ECO:0000250" key="1"/>
<evidence type="ECO:0000305" key="2"/>
<name>Y1556_HAEIN</name>